<protein>
    <recommendedName>
        <fullName evidence="1">Hydroxylamine reductase</fullName>
        <ecNumber evidence="1">1.7.99.1</ecNumber>
    </recommendedName>
    <alternativeName>
        <fullName evidence="1">Hybrid-cluster protein</fullName>
        <shortName evidence="1">HCP</shortName>
    </alternativeName>
    <alternativeName>
        <fullName evidence="1">Prismane protein</fullName>
    </alternativeName>
</protein>
<sequence>MSMFCYQCQEAAGCKGCTVRGVCGKTEDVAKSQDLLIYILKGISVYGVKGREVGVINKEVDNFMVEGLFATITNANFDREVFIERIKRGLQLRQELKEQVIKAGGNVENSHANKNWLDKMLSFVGLKKEEETKLPDAATWFADNVEEFNAKAEKVGVLATKDEDIRSLRELITYGIKGLAAYVEHAHNLNFDNEEIHGFMHKALAATLDDTLTVDDLVALTLETGKYGVEGMALLDKANTQTYGNPEITKVNIGVRNNPGILISGHDLRDLEQLLEQTKGTGVDVYTHSEMLPAHYYPAFKKYSHFAGNYGNAWWKQTEEFEKFNGPILMTTNCLVPPKDSYKDRVYTTGVVGFPGLKHIDADEKGEKDFSSIIEHAKKCAAPTEIEKGEIVGGFAHNQVFQLADKVVEAVKTGAIKRFFVMAGCDGRAKSRNYYTEFAQKLPKDTVILTAGCAKYKYNKLNLGDIGGIPRVLDAGQCNDSYSLALIALKLKEVFELEDINELPISYNIAWYEQKAVIVLLALLHLGVKNIHLGPTLPAFLSPNVANVLVENFGIGGITNVEDDMKMFLG</sequence>
<comment type="function">
    <text evidence="1">Catalyzes the reduction of hydroxylamine to form NH(3) and H(2)O.</text>
</comment>
<comment type="catalytic activity">
    <reaction evidence="1">
        <text>A + NH4(+) + H2O = hydroxylamine + AH2 + H(+)</text>
        <dbReference type="Rhea" id="RHEA:22052"/>
        <dbReference type="ChEBI" id="CHEBI:13193"/>
        <dbReference type="ChEBI" id="CHEBI:15377"/>
        <dbReference type="ChEBI" id="CHEBI:15378"/>
        <dbReference type="ChEBI" id="CHEBI:15429"/>
        <dbReference type="ChEBI" id="CHEBI:17499"/>
        <dbReference type="ChEBI" id="CHEBI:28938"/>
        <dbReference type="EC" id="1.7.99.1"/>
    </reaction>
</comment>
<comment type="cofactor">
    <cofactor evidence="1">
        <name>[4Fe-4S] cluster</name>
        <dbReference type="ChEBI" id="CHEBI:49883"/>
    </cofactor>
    <text evidence="1">Binds 1 [4Fe-4S] cluster.</text>
</comment>
<comment type="cofactor">
    <cofactor evidence="1">
        <name>hybrid [4Fe-2O-2S] cluster</name>
        <dbReference type="ChEBI" id="CHEBI:60519"/>
    </cofactor>
    <text evidence="1">Binds 1 hybrid [4Fe-2O-2S] cluster.</text>
</comment>
<comment type="subcellular location">
    <subcellularLocation>
        <location evidence="1">Cytoplasm</location>
    </subcellularLocation>
</comment>
<comment type="similarity">
    <text evidence="1">Belongs to the HCP family.</text>
</comment>
<gene>
    <name evidence="1" type="primary">hcp</name>
    <name type="ordered locus">CTC_00410</name>
</gene>
<keyword id="KW-0004">4Fe-4S</keyword>
<keyword id="KW-0963">Cytoplasm</keyword>
<keyword id="KW-0408">Iron</keyword>
<keyword id="KW-0411">Iron-sulfur</keyword>
<keyword id="KW-0479">Metal-binding</keyword>
<keyword id="KW-0560">Oxidoreductase</keyword>
<keyword id="KW-1185">Reference proteome</keyword>
<proteinExistence type="inferred from homology"/>
<accession>Q898N5</accession>
<organism>
    <name type="scientific">Clostridium tetani (strain Massachusetts / E88)</name>
    <dbReference type="NCBI Taxonomy" id="212717"/>
    <lineage>
        <taxon>Bacteria</taxon>
        <taxon>Bacillati</taxon>
        <taxon>Bacillota</taxon>
        <taxon>Clostridia</taxon>
        <taxon>Eubacteriales</taxon>
        <taxon>Clostridiaceae</taxon>
        <taxon>Clostridium</taxon>
    </lineage>
</organism>
<evidence type="ECO:0000255" key="1">
    <source>
        <dbReference type="HAMAP-Rule" id="MF_00069"/>
    </source>
</evidence>
<reference key="1">
    <citation type="journal article" date="2003" name="Proc. Natl. Acad. Sci. U.S.A.">
        <title>The genome sequence of Clostridium tetani, the causative agent of tetanus disease.</title>
        <authorList>
            <person name="Brueggemann H."/>
            <person name="Baeumer S."/>
            <person name="Fricke W.F."/>
            <person name="Wiezer A."/>
            <person name="Liesegang H."/>
            <person name="Decker I."/>
            <person name="Herzberg C."/>
            <person name="Martinez-Arias R."/>
            <person name="Merkl R."/>
            <person name="Henne A."/>
            <person name="Gottschalk G."/>
        </authorList>
    </citation>
    <scope>NUCLEOTIDE SEQUENCE [LARGE SCALE GENOMIC DNA]</scope>
    <source>
        <strain>Massachusetts / E88</strain>
    </source>
</reference>
<dbReference type="EC" id="1.7.99.1" evidence="1"/>
<dbReference type="EMBL" id="AE015927">
    <property type="protein sequence ID" value="AAO35044.1"/>
    <property type="molecule type" value="Genomic_DNA"/>
</dbReference>
<dbReference type="RefSeq" id="WP_035111049.1">
    <property type="nucleotide sequence ID" value="NC_004557.1"/>
</dbReference>
<dbReference type="SMR" id="Q898N5"/>
<dbReference type="STRING" id="212717.CTC_00410"/>
<dbReference type="GeneID" id="24253194"/>
<dbReference type="KEGG" id="ctc:CTC_00410"/>
<dbReference type="HOGENOM" id="CLU_038344_2_0_9"/>
<dbReference type="OrthoDB" id="9761526at2"/>
<dbReference type="Proteomes" id="UP000001412">
    <property type="component" value="Chromosome"/>
</dbReference>
<dbReference type="GO" id="GO:0005737">
    <property type="term" value="C:cytoplasm"/>
    <property type="evidence" value="ECO:0007669"/>
    <property type="project" value="UniProtKB-SubCell"/>
</dbReference>
<dbReference type="GO" id="GO:0051539">
    <property type="term" value="F:4 iron, 4 sulfur cluster binding"/>
    <property type="evidence" value="ECO:0007669"/>
    <property type="project" value="UniProtKB-KW"/>
</dbReference>
<dbReference type="GO" id="GO:0050418">
    <property type="term" value="F:hydroxylamine reductase activity"/>
    <property type="evidence" value="ECO:0007669"/>
    <property type="project" value="UniProtKB-UniRule"/>
</dbReference>
<dbReference type="GO" id="GO:0046872">
    <property type="term" value="F:metal ion binding"/>
    <property type="evidence" value="ECO:0007669"/>
    <property type="project" value="UniProtKB-KW"/>
</dbReference>
<dbReference type="GO" id="GO:0004601">
    <property type="term" value="F:peroxidase activity"/>
    <property type="evidence" value="ECO:0007669"/>
    <property type="project" value="TreeGrafter"/>
</dbReference>
<dbReference type="GO" id="GO:0042542">
    <property type="term" value="P:response to hydrogen peroxide"/>
    <property type="evidence" value="ECO:0007669"/>
    <property type="project" value="TreeGrafter"/>
</dbReference>
<dbReference type="CDD" id="cd01914">
    <property type="entry name" value="HCP"/>
    <property type="match status" value="1"/>
</dbReference>
<dbReference type="FunFam" id="1.20.1270.20:FF:000001">
    <property type="entry name" value="Hydroxylamine reductase"/>
    <property type="match status" value="1"/>
</dbReference>
<dbReference type="FunFam" id="3.40.50.2030:FF:000001">
    <property type="entry name" value="Hydroxylamine reductase"/>
    <property type="match status" value="1"/>
</dbReference>
<dbReference type="FunFam" id="3.40.50.2030:FF:000002">
    <property type="entry name" value="Hydroxylamine reductase"/>
    <property type="match status" value="1"/>
</dbReference>
<dbReference type="Gene3D" id="1.20.1270.20">
    <property type="match status" value="2"/>
</dbReference>
<dbReference type="Gene3D" id="3.40.50.2030">
    <property type="match status" value="2"/>
</dbReference>
<dbReference type="HAMAP" id="MF_00069">
    <property type="entry name" value="Hydroxylam_reduct"/>
    <property type="match status" value="1"/>
</dbReference>
<dbReference type="InterPro" id="IPR004137">
    <property type="entry name" value="HCP/CODH"/>
</dbReference>
<dbReference type="InterPro" id="IPR010048">
    <property type="entry name" value="Hydroxylam_reduct"/>
</dbReference>
<dbReference type="InterPro" id="IPR016099">
    <property type="entry name" value="Prismane-like_a/b-sand"/>
</dbReference>
<dbReference type="InterPro" id="IPR011254">
    <property type="entry name" value="Prismane-like_sf"/>
</dbReference>
<dbReference type="InterPro" id="IPR016100">
    <property type="entry name" value="Prismane_a-bundle"/>
</dbReference>
<dbReference type="NCBIfam" id="TIGR01703">
    <property type="entry name" value="hybrid_clust"/>
    <property type="match status" value="1"/>
</dbReference>
<dbReference type="NCBIfam" id="NF003658">
    <property type="entry name" value="PRK05290.1"/>
    <property type="match status" value="1"/>
</dbReference>
<dbReference type="PANTHER" id="PTHR30109">
    <property type="entry name" value="HYDROXYLAMINE REDUCTASE"/>
    <property type="match status" value="1"/>
</dbReference>
<dbReference type="PANTHER" id="PTHR30109:SF0">
    <property type="entry name" value="HYDROXYLAMINE REDUCTASE"/>
    <property type="match status" value="1"/>
</dbReference>
<dbReference type="Pfam" id="PF03063">
    <property type="entry name" value="Prismane"/>
    <property type="match status" value="1"/>
</dbReference>
<dbReference type="PIRSF" id="PIRSF000076">
    <property type="entry name" value="HCP"/>
    <property type="match status" value="1"/>
</dbReference>
<dbReference type="SUPFAM" id="SSF56821">
    <property type="entry name" value="Prismane protein-like"/>
    <property type="match status" value="1"/>
</dbReference>
<name>HCP_CLOTE</name>
<feature type="chain" id="PRO_0000151673" description="Hydroxylamine reductase">
    <location>
        <begin position="1"/>
        <end position="570"/>
    </location>
</feature>
<feature type="binding site" evidence="1">
    <location>
        <position position="5"/>
    </location>
    <ligand>
        <name>[4Fe-4S] cluster</name>
        <dbReference type="ChEBI" id="CHEBI:49883"/>
    </ligand>
</feature>
<feature type="binding site" evidence="1">
    <location>
        <position position="8"/>
    </location>
    <ligand>
        <name>[4Fe-4S] cluster</name>
        <dbReference type="ChEBI" id="CHEBI:49883"/>
    </ligand>
</feature>
<feature type="binding site" evidence="1">
    <location>
        <position position="17"/>
    </location>
    <ligand>
        <name>[4Fe-4S] cluster</name>
        <dbReference type="ChEBI" id="CHEBI:49883"/>
    </ligand>
</feature>
<feature type="binding site" evidence="1">
    <location>
        <position position="23"/>
    </location>
    <ligand>
        <name>[4Fe-4S] cluster</name>
        <dbReference type="ChEBI" id="CHEBI:49883"/>
    </ligand>
</feature>
<feature type="binding site" evidence="1">
    <location>
        <position position="266"/>
    </location>
    <ligand>
        <name>hybrid [4Fe-2O-2S] cluster</name>
        <dbReference type="ChEBI" id="CHEBI:60519"/>
    </ligand>
</feature>
<feature type="binding site" evidence="1">
    <location>
        <position position="290"/>
    </location>
    <ligand>
        <name>hybrid [4Fe-2O-2S] cluster</name>
        <dbReference type="ChEBI" id="CHEBI:60519"/>
    </ligand>
</feature>
<feature type="binding site" evidence="1">
    <location>
        <position position="334"/>
    </location>
    <ligand>
        <name>hybrid [4Fe-2O-2S] cluster</name>
        <dbReference type="ChEBI" id="CHEBI:60519"/>
    </ligand>
</feature>
<feature type="binding site" description="via persulfide group" evidence="1">
    <location>
        <position position="425"/>
    </location>
    <ligand>
        <name>hybrid [4Fe-2O-2S] cluster</name>
        <dbReference type="ChEBI" id="CHEBI:60519"/>
    </ligand>
</feature>
<feature type="binding site" evidence="1">
    <location>
        <position position="453"/>
    </location>
    <ligand>
        <name>hybrid [4Fe-2O-2S] cluster</name>
        <dbReference type="ChEBI" id="CHEBI:60519"/>
    </ligand>
</feature>
<feature type="binding site" evidence="1">
    <location>
        <position position="478"/>
    </location>
    <ligand>
        <name>hybrid [4Fe-2O-2S] cluster</name>
        <dbReference type="ChEBI" id="CHEBI:60519"/>
    </ligand>
</feature>
<feature type="binding site" evidence="1">
    <location>
        <position position="513"/>
    </location>
    <ligand>
        <name>hybrid [4Fe-2O-2S] cluster</name>
        <dbReference type="ChEBI" id="CHEBI:60519"/>
    </ligand>
</feature>
<feature type="binding site" evidence="1">
    <location>
        <position position="515"/>
    </location>
    <ligand>
        <name>hybrid [4Fe-2O-2S] cluster</name>
        <dbReference type="ChEBI" id="CHEBI:60519"/>
    </ligand>
</feature>
<feature type="modified residue" description="Cysteine persulfide" evidence="1">
    <location>
        <position position="425"/>
    </location>
</feature>